<comment type="function">
    <text evidence="1">Part of the ABC transporter complex MglABC involved in galactose/methyl galactoside import. Responsible for energy coupling to the transport system.</text>
</comment>
<comment type="catalytic activity">
    <reaction evidence="1">
        <text>D-galactose(out) + ATP + H2O = D-galactose(in) + ADP + phosphate + H(+)</text>
        <dbReference type="Rhea" id="RHEA:60156"/>
        <dbReference type="ChEBI" id="CHEBI:4139"/>
        <dbReference type="ChEBI" id="CHEBI:15377"/>
        <dbReference type="ChEBI" id="CHEBI:15378"/>
        <dbReference type="ChEBI" id="CHEBI:30616"/>
        <dbReference type="ChEBI" id="CHEBI:43474"/>
        <dbReference type="ChEBI" id="CHEBI:456216"/>
        <dbReference type="EC" id="7.5.2.11"/>
    </reaction>
    <physiologicalReaction direction="left-to-right" evidence="1">
        <dbReference type="Rhea" id="RHEA:60157"/>
    </physiologicalReaction>
</comment>
<comment type="catalytic activity">
    <reaction evidence="1">
        <text>methyl beta-D-galactoside(out) + ATP + H2O = methyl beta-D-galactoside(in) + ADP + phosphate + H(+)</text>
        <dbReference type="Rhea" id="RHEA:72531"/>
        <dbReference type="ChEBI" id="CHEBI:15377"/>
        <dbReference type="ChEBI" id="CHEBI:15378"/>
        <dbReference type="ChEBI" id="CHEBI:17540"/>
        <dbReference type="ChEBI" id="CHEBI:30616"/>
        <dbReference type="ChEBI" id="CHEBI:43474"/>
        <dbReference type="ChEBI" id="CHEBI:456216"/>
    </reaction>
    <physiologicalReaction direction="left-to-right" evidence="1">
        <dbReference type="Rhea" id="RHEA:72532"/>
    </physiologicalReaction>
</comment>
<comment type="subunit">
    <text evidence="1">The complex is composed of one ATP-binding protein (MglA), two transmembrane proteins (MglC) and a solute-binding protein (MglB).</text>
</comment>
<comment type="subcellular location">
    <subcellularLocation>
        <location evidence="1">Cell inner membrane</location>
        <topology evidence="1">Peripheral membrane protein</topology>
    </subcellularLocation>
</comment>
<comment type="similarity">
    <text evidence="1">Belongs to the ABC transporter superfamily. Galactose/methyl galactoside importer (TC 3.A.1.2.3) family.</text>
</comment>
<sequence length="506" mass="56416">MTTQIPNQDSEILLTMTNVCKSFPGVKALDNANLTVRSHSVHALMGENGAGKSTLLKCLFGIYSKDEGDILFLGKPVNFKTSKEALENGISMVHQELNLVKQCTVMDNLWLGRYPLKAGFVDHGKMYRDTKAIFEELDIDIDPKEKVAKLSVSQMQMIEIAKAFSYNAKIVIMDEPTSSLSEKEVEHLFKIIAKLKQRGCGIIYISHKMDEIFKICDEITILRDGKWINTVAVKGTTMDQIVSMMVGRELTQRFPPKTNTPKETILTVENLTALNQPSIQDVSFELRKGEVLGIAGLVGAKRTDIVETIFGVRERKSGVIKLHDKEMKNRNAFEAINNGFALVTEERRSTGIYANLSIEFNSLISNMKSYISKLGLLSNTKMKSDTQWVIDSMNVKTPSHKTNIGSLSGGNQQKVVIGRWLLTQPEILMLDEPTRGIDIGAKYEIYQLIMELAKKDKGIIMISSEMPELLGVTDRILVMSNGKVAGIVNTAETSQEEILQLAAKYL</sequence>
<gene>
    <name evidence="1" type="primary">mglA</name>
    <name type="ordered locus">PM1039</name>
</gene>
<protein>
    <recommendedName>
        <fullName evidence="1">Galactose/methyl galactoside import ATP-binding protein MglA</fullName>
        <ecNumber evidence="1">7.5.2.11</ecNumber>
    </recommendedName>
</protein>
<name>MGLA_PASMU</name>
<keyword id="KW-0067">ATP-binding</keyword>
<keyword id="KW-0997">Cell inner membrane</keyword>
<keyword id="KW-1003">Cell membrane</keyword>
<keyword id="KW-0472">Membrane</keyword>
<keyword id="KW-0547">Nucleotide-binding</keyword>
<keyword id="KW-1185">Reference proteome</keyword>
<keyword id="KW-0677">Repeat</keyword>
<keyword id="KW-0762">Sugar transport</keyword>
<keyword id="KW-1278">Translocase</keyword>
<keyword id="KW-0813">Transport</keyword>
<evidence type="ECO:0000255" key="1">
    <source>
        <dbReference type="HAMAP-Rule" id="MF_01717"/>
    </source>
</evidence>
<feature type="chain" id="PRO_0000261370" description="Galactose/methyl galactoside import ATP-binding protein MglA">
    <location>
        <begin position="1"/>
        <end position="506"/>
    </location>
</feature>
<feature type="domain" description="ABC transporter 1" evidence="1">
    <location>
        <begin position="14"/>
        <end position="249"/>
    </location>
</feature>
<feature type="domain" description="ABC transporter 2" evidence="1">
    <location>
        <begin position="260"/>
        <end position="506"/>
    </location>
</feature>
<feature type="binding site" evidence="1">
    <location>
        <begin position="46"/>
        <end position="53"/>
    </location>
    <ligand>
        <name>ATP</name>
        <dbReference type="ChEBI" id="CHEBI:30616"/>
    </ligand>
</feature>
<reference key="1">
    <citation type="journal article" date="2001" name="Proc. Natl. Acad. Sci. U.S.A.">
        <title>Complete genomic sequence of Pasteurella multocida Pm70.</title>
        <authorList>
            <person name="May B.J."/>
            <person name="Zhang Q."/>
            <person name="Li L.L."/>
            <person name="Paustian M.L."/>
            <person name="Whittam T.S."/>
            <person name="Kapur V."/>
        </authorList>
    </citation>
    <scope>NUCLEOTIDE SEQUENCE [LARGE SCALE GENOMIC DNA]</scope>
    <source>
        <strain>Pm70</strain>
    </source>
</reference>
<proteinExistence type="inferred from homology"/>
<organism>
    <name type="scientific">Pasteurella multocida (strain Pm70)</name>
    <dbReference type="NCBI Taxonomy" id="272843"/>
    <lineage>
        <taxon>Bacteria</taxon>
        <taxon>Pseudomonadati</taxon>
        <taxon>Pseudomonadota</taxon>
        <taxon>Gammaproteobacteria</taxon>
        <taxon>Pasteurellales</taxon>
        <taxon>Pasteurellaceae</taxon>
        <taxon>Pasteurella</taxon>
    </lineage>
</organism>
<accession>Q9CM08</accession>
<dbReference type="EC" id="7.5.2.11" evidence="1"/>
<dbReference type="EMBL" id="AE004439">
    <property type="protein sequence ID" value="AAK03123.1"/>
    <property type="molecule type" value="Genomic_DNA"/>
</dbReference>
<dbReference type="RefSeq" id="WP_005717348.1">
    <property type="nucleotide sequence ID" value="NC_002663.1"/>
</dbReference>
<dbReference type="SMR" id="Q9CM08"/>
<dbReference type="STRING" id="272843.PM1039"/>
<dbReference type="EnsemblBacteria" id="AAK03123">
    <property type="protein sequence ID" value="AAK03123"/>
    <property type="gene ID" value="PM1039"/>
</dbReference>
<dbReference type="GeneID" id="77206354"/>
<dbReference type="KEGG" id="pmu:PM1039"/>
<dbReference type="HOGENOM" id="CLU_000604_92_3_6"/>
<dbReference type="OrthoDB" id="9776369at2"/>
<dbReference type="Proteomes" id="UP000000809">
    <property type="component" value="Chromosome"/>
</dbReference>
<dbReference type="GO" id="GO:0005886">
    <property type="term" value="C:plasma membrane"/>
    <property type="evidence" value="ECO:0007669"/>
    <property type="project" value="UniProtKB-SubCell"/>
</dbReference>
<dbReference type="GO" id="GO:0005524">
    <property type="term" value="F:ATP binding"/>
    <property type="evidence" value="ECO:0007669"/>
    <property type="project" value="UniProtKB-KW"/>
</dbReference>
<dbReference type="GO" id="GO:0016887">
    <property type="term" value="F:ATP hydrolysis activity"/>
    <property type="evidence" value="ECO:0007669"/>
    <property type="project" value="InterPro"/>
</dbReference>
<dbReference type="CDD" id="cd03216">
    <property type="entry name" value="ABC_Carb_Monos_I"/>
    <property type="match status" value="1"/>
</dbReference>
<dbReference type="CDD" id="cd03215">
    <property type="entry name" value="ABC_Carb_Monos_II"/>
    <property type="match status" value="1"/>
</dbReference>
<dbReference type="FunFam" id="3.40.50.300:FF:000126">
    <property type="entry name" value="Galactose/methyl galactoside import ATP-binding protein MglA"/>
    <property type="match status" value="1"/>
</dbReference>
<dbReference type="FunFam" id="3.40.50.300:FF:000127">
    <property type="entry name" value="Ribose import ATP-binding protein RbsA"/>
    <property type="match status" value="1"/>
</dbReference>
<dbReference type="Gene3D" id="3.40.50.300">
    <property type="entry name" value="P-loop containing nucleotide triphosphate hydrolases"/>
    <property type="match status" value="2"/>
</dbReference>
<dbReference type="InterPro" id="IPR003593">
    <property type="entry name" value="AAA+_ATPase"/>
</dbReference>
<dbReference type="InterPro" id="IPR050107">
    <property type="entry name" value="ABC_carbohydrate_import_ATPase"/>
</dbReference>
<dbReference type="InterPro" id="IPR003439">
    <property type="entry name" value="ABC_transporter-like_ATP-bd"/>
</dbReference>
<dbReference type="InterPro" id="IPR017871">
    <property type="entry name" value="ABC_transporter-like_CS"/>
</dbReference>
<dbReference type="InterPro" id="IPR027417">
    <property type="entry name" value="P-loop_NTPase"/>
</dbReference>
<dbReference type="NCBIfam" id="NF008215">
    <property type="entry name" value="PRK10982.1"/>
    <property type="match status" value="1"/>
</dbReference>
<dbReference type="PANTHER" id="PTHR43790">
    <property type="entry name" value="CARBOHYDRATE TRANSPORT ATP-BINDING PROTEIN MG119-RELATED"/>
    <property type="match status" value="1"/>
</dbReference>
<dbReference type="PANTHER" id="PTHR43790:SF7">
    <property type="entry name" value="GALACTOSE_METHYL GALACTOSIDE IMPORT ATP-BINDING PROTEIN MGLA"/>
    <property type="match status" value="1"/>
</dbReference>
<dbReference type="Pfam" id="PF00005">
    <property type="entry name" value="ABC_tran"/>
    <property type="match status" value="2"/>
</dbReference>
<dbReference type="SMART" id="SM00382">
    <property type="entry name" value="AAA"/>
    <property type="match status" value="2"/>
</dbReference>
<dbReference type="SUPFAM" id="SSF52540">
    <property type="entry name" value="P-loop containing nucleoside triphosphate hydrolases"/>
    <property type="match status" value="2"/>
</dbReference>
<dbReference type="PROSITE" id="PS00211">
    <property type="entry name" value="ABC_TRANSPORTER_1"/>
    <property type="match status" value="1"/>
</dbReference>
<dbReference type="PROSITE" id="PS50893">
    <property type="entry name" value="ABC_TRANSPORTER_2"/>
    <property type="match status" value="2"/>
</dbReference>
<dbReference type="PROSITE" id="PS51260">
    <property type="entry name" value="MGLA"/>
    <property type="match status" value="1"/>
</dbReference>